<name>I1B5_CONLY</name>
<evidence type="ECO:0000250" key="1"/>
<evidence type="ECO:0000250" key="2">
    <source>
        <dbReference type="UniProtKB" id="Q7Z094"/>
    </source>
</evidence>
<evidence type="ECO:0000305" key="3"/>
<proteinExistence type="evidence at transcript level"/>
<sequence length="38" mass="4122">NWSWCSGSGEGCDYHSECCGERCCIESMCIGDGVACWP</sequence>
<feature type="peptide" id="PRO_0000314088" description="Iota-conotoxin-like L11.5">
    <location>
        <begin position="1"/>
        <end position="38"/>
    </location>
</feature>
<feature type="disulfide bond" evidence="2">
    <location>
        <begin position="5"/>
        <end position="19"/>
    </location>
</feature>
<feature type="disulfide bond" evidence="2">
    <location>
        <begin position="12"/>
        <end position="24"/>
    </location>
</feature>
<feature type="disulfide bond" evidence="2">
    <location>
        <begin position="18"/>
        <end position="29"/>
    </location>
</feature>
<feature type="disulfide bond" evidence="2">
    <location>
        <begin position="23"/>
        <end position="36"/>
    </location>
</feature>
<keyword id="KW-1015">Disulfide bond</keyword>
<keyword id="KW-0872">Ion channel impairing toxin</keyword>
<keyword id="KW-0528">Neurotoxin</keyword>
<keyword id="KW-0964">Secreted</keyword>
<keyword id="KW-0800">Toxin</keyword>
<keyword id="KW-0738">Voltage-gated sodium channel impairing toxin</keyword>
<comment type="function">
    <text evidence="1">Iota-conotoxins bind to voltage-gated sodium channels (Nav) and act as agonists by shifting the voltage-dependence of activation to more hyperpolarized levels. Produces general excitatory symptoms (By similarity).</text>
</comment>
<comment type="subcellular location">
    <subcellularLocation>
        <location evidence="1">Secreted</location>
    </subcellularLocation>
</comment>
<comment type="tissue specificity">
    <text>Expressed by the venom duct.</text>
</comment>
<comment type="domain">
    <text>The cysteine framework is XI (C-C-CC-CC-C-C).</text>
</comment>
<comment type="similarity">
    <text evidence="3">Belongs to the conotoxin I1 superfamily.</text>
</comment>
<accession>P0C612</accession>
<organism>
    <name type="scientific">Conus lynceus</name>
    <name type="common">Lynceus cone</name>
    <dbReference type="NCBI Taxonomy" id="289038"/>
    <lineage>
        <taxon>Eukaryota</taxon>
        <taxon>Metazoa</taxon>
        <taxon>Spiralia</taxon>
        <taxon>Lophotrochozoa</taxon>
        <taxon>Mollusca</taxon>
        <taxon>Gastropoda</taxon>
        <taxon>Caenogastropoda</taxon>
        <taxon>Neogastropoda</taxon>
        <taxon>Conoidea</taxon>
        <taxon>Conidae</taxon>
        <taxon>Conus</taxon>
        <taxon>Phasmoconus</taxon>
    </lineage>
</organism>
<reference key="1">
    <citation type="journal article" date="2008" name="Toxicon">
        <title>I(1)-superfamily conotoxins and prediction of single D-amino acid occurrence.</title>
        <authorList>
            <person name="Buczek O."/>
            <person name="Jimenez E.C."/>
            <person name="Yoshikami D."/>
            <person name="Imperial J.S."/>
            <person name="Watkins M."/>
            <person name="Morrison A."/>
            <person name="Olivera B.M."/>
        </authorList>
    </citation>
    <scope>NUCLEOTIDE SEQUENCE [MRNA]</scope>
    <source>
        <tissue>Venom duct</tissue>
    </source>
</reference>
<dbReference type="ConoServer" id="2805">
    <property type="toxin name" value="L11.5 precursor"/>
</dbReference>
<dbReference type="GO" id="GO:0005576">
    <property type="term" value="C:extracellular region"/>
    <property type="evidence" value="ECO:0007669"/>
    <property type="project" value="UniProtKB-SubCell"/>
</dbReference>
<dbReference type="GO" id="GO:0017080">
    <property type="term" value="F:sodium channel regulator activity"/>
    <property type="evidence" value="ECO:0007669"/>
    <property type="project" value="UniProtKB-KW"/>
</dbReference>
<dbReference type="GO" id="GO:0090729">
    <property type="term" value="F:toxin activity"/>
    <property type="evidence" value="ECO:0007669"/>
    <property type="project" value="UniProtKB-KW"/>
</dbReference>
<dbReference type="PROSITE" id="PS60019">
    <property type="entry name" value="I_CONOTOXIN"/>
    <property type="match status" value="1"/>
</dbReference>
<protein>
    <recommendedName>
        <fullName>Iota-conotoxin-like L11.5</fullName>
    </recommendedName>
</protein>